<organism>
    <name type="scientific">Koribacter versatilis (strain Ellin345)</name>
    <dbReference type="NCBI Taxonomy" id="204669"/>
    <lineage>
        <taxon>Bacteria</taxon>
        <taxon>Pseudomonadati</taxon>
        <taxon>Acidobacteriota</taxon>
        <taxon>Terriglobia</taxon>
        <taxon>Terriglobales</taxon>
        <taxon>Candidatus Korobacteraceae</taxon>
        <taxon>Candidatus Korobacter</taxon>
    </lineage>
</organism>
<evidence type="ECO:0000255" key="1">
    <source>
        <dbReference type="HAMAP-Rule" id="MF_01398"/>
    </source>
</evidence>
<evidence type="ECO:0000256" key="2">
    <source>
        <dbReference type="SAM" id="MobiDB-lite"/>
    </source>
</evidence>
<evidence type="ECO:0000305" key="3"/>
<reference key="1">
    <citation type="journal article" date="2009" name="Appl. Environ. Microbiol.">
        <title>Three genomes from the phylum Acidobacteria provide insight into the lifestyles of these microorganisms in soils.</title>
        <authorList>
            <person name="Ward N.L."/>
            <person name="Challacombe J.F."/>
            <person name="Janssen P.H."/>
            <person name="Henrissat B."/>
            <person name="Coutinho P.M."/>
            <person name="Wu M."/>
            <person name="Xie G."/>
            <person name="Haft D.H."/>
            <person name="Sait M."/>
            <person name="Badger J."/>
            <person name="Barabote R.D."/>
            <person name="Bradley B."/>
            <person name="Brettin T.S."/>
            <person name="Brinkac L.M."/>
            <person name="Bruce D."/>
            <person name="Creasy T."/>
            <person name="Daugherty S.C."/>
            <person name="Davidsen T.M."/>
            <person name="DeBoy R.T."/>
            <person name="Detter J.C."/>
            <person name="Dodson R.J."/>
            <person name="Durkin A.S."/>
            <person name="Ganapathy A."/>
            <person name="Gwinn-Giglio M."/>
            <person name="Han C.S."/>
            <person name="Khouri H."/>
            <person name="Kiss H."/>
            <person name="Kothari S.P."/>
            <person name="Madupu R."/>
            <person name="Nelson K.E."/>
            <person name="Nelson W.C."/>
            <person name="Paulsen I."/>
            <person name="Penn K."/>
            <person name="Ren Q."/>
            <person name="Rosovitz M.J."/>
            <person name="Selengut J.D."/>
            <person name="Shrivastava S."/>
            <person name="Sullivan S.A."/>
            <person name="Tapia R."/>
            <person name="Thompson L.S."/>
            <person name="Watkins K.L."/>
            <person name="Yang Q."/>
            <person name="Yu C."/>
            <person name="Zafar N."/>
            <person name="Zhou L."/>
            <person name="Kuske C.R."/>
        </authorList>
    </citation>
    <scope>NUCLEOTIDE SEQUENCE [LARGE SCALE GENOMIC DNA]</scope>
    <source>
        <strain>Ellin345</strain>
    </source>
</reference>
<comment type="function">
    <text evidence="1">F(1)F(0) ATP synthase produces ATP from ADP in the presence of a proton or sodium gradient. F-type ATPases consist of two structural domains, F(1) containing the extramembraneous catalytic core and F(0) containing the membrane proton channel, linked together by a central stalk and a peripheral stalk. During catalysis, ATP synthesis in the catalytic domain of F(1) is coupled via a rotary mechanism of the central stalk subunits to proton translocation.</text>
</comment>
<comment type="function">
    <text evidence="1">Component of the F(0) channel, it forms part of the peripheral stalk, linking F(1) to F(0).</text>
</comment>
<comment type="subunit">
    <text evidence="1">F-type ATPases have 2 components, F(1) - the catalytic core - and F(0) - the membrane proton channel. F(1) has five subunits: alpha(3), beta(3), gamma(1), delta(1), epsilon(1). F(0) has three main subunits: a(1), b(2) and c(10-14). The alpha and beta chains form an alternating ring which encloses part of the gamma chain. F(1) is attached to F(0) by a central stalk formed by the gamma and epsilon chains, while a peripheral stalk is formed by the delta and b chains.</text>
</comment>
<comment type="subcellular location">
    <subcellularLocation>
        <location evidence="1">Cell inner membrane</location>
        <topology evidence="1">Single-pass membrane protein</topology>
    </subcellularLocation>
</comment>
<comment type="similarity">
    <text evidence="1">Belongs to the ATPase B chain family.</text>
</comment>
<comment type="sequence caution" evidence="3">
    <conflict type="erroneous initiation">
        <sequence resource="EMBL-CDS" id="ABF43336"/>
    </conflict>
</comment>
<proteinExistence type="inferred from homology"/>
<feature type="chain" id="PRO_5000121920" description="ATP synthase subunit b">
    <location>
        <begin position="1"/>
        <end position="239"/>
    </location>
</feature>
<feature type="transmembrane region" description="Helical" evidence="1">
    <location>
        <begin position="85"/>
        <end position="105"/>
    </location>
</feature>
<feature type="region of interest" description="Disordered" evidence="2">
    <location>
        <begin position="1"/>
        <end position="64"/>
    </location>
</feature>
<feature type="compositionally biased region" description="Low complexity" evidence="2">
    <location>
        <begin position="1"/>
        <end position="22"/>
    </location>
</feature>
<feature type="compositionally biased region" description="Basic and acidic residues" evidence="2">
    <location>
        <begin position="23"/>
        <end position="33"/>
    </location>
</feature>
<feature type="compositionally biased region" description="Basic and acidic residues" evidence="2">
    <location>
        <begin position="45"/>
        <end position="64"/>
    </location>
</feature>
<dbReference type="EMBL" id="CP000360">
    <property type="protein sequence ID" value="ABF43336.1"/>
    <property type="status" value="ALT_INIT"/>
    <property type="molecule type" value="Genomic_DNA"/>
</dbReference>
<dbReference type="RefSeq" id="WP_011525133.1">
    <property type="nucleotide sequence ID" value="NC_008009.1"/>
</dbReference>
<dbReference type="SMR" id="Q1IIG4"/>
<dbReference type="STRING" id="204669.Acid345_4336"/>
<dbReference type="EnsemblBacteria" id="ABF43336">
    <property type="protein sequence ID" value="ABF43336"/>
    <property type="gene ID" value="Acid345_4336"/>
</dbReference>
<dbReference type="KEGG" id="aba:Acid345_4336"/>
<dbReference type="eggNOG" id="COG0711">
    <property type="taxonomic scope" value="Bacteria"/>
</dbReference>
<dbReference type="HOGENOM" id="CLU_1064695_0_0_0"/>
<dbReference type="OrthoDB" id="123339at2"/>
<dbReference type="Proteomes" id="UP000002432">
    <property type="component" value="Chromosome"/>
</dbReference>
<dbReference type="GO" id="GO:0005886">
    <property type="term" value="C:plasma membrane"/>
    <property type="evidence" value="ECO:0007669"/>
    <property type="project" value="UniProtKB-SubCell"/>
</dbReference>
<dbReference type="GO" id="GO:0045259">
    <property type="term" value="C:proton-transporting ATP synthase complex"/>
    <property type="evidence" value="ECO:0007669"/>
    <property type="project" value="UniProtKB-KW"/>
</dbReference>
<dbReference type="GO" id="GO:0046933">
    <property type="term" value="F:proton-transporting ATP synthase activity, rotational mechanism"/>
    <property type="evidence" value="ECO:0007669"/>
    <property type="project" value="UniProtKB-UniRule"/>
</dbReference>
<dbReference type="GO" id="GO:0046961">
    <property type="term" value="F:proton-transporting ATPase activity, rotational mechanism"/>
    <property type="evidence" value="ECO:0007669"/>
    <property type="project" value="TreeGrafter"/>
</dbReference>
<dbReference type="CDD" id="cd06503">
    <property type="entry name" value="ATP-synt_Fo_b"/>
    <property type="match status" value="1"/>
</dbReference>
<dbReference type="HAMAP" id="MF_01398">
    <property type="entry name" value="ATP_synth_b_bprime"/>
    <property type="match status" value="1"/>
</dbReference>
<dbReference type="InterPro" id="IPR002146">
    <property type="entry name" value="ATP_synth_b/b'su_bac/chlpt"/>
</dbReference>
<dbReference type="InterPro" id="IPR050059">
    <property type="entry name" value="ATP_synthase_B_chain"/>
</dbReference>
<dbReference type="PANTHER" id="PTHR33445:SF1">
    <property type="entry name" value="ATP SYNTHASE SUBUNIT B"/>
    <property type="match status" value="1"/>
</dbReference>
<dbReference type="PANTHER" id="PTHR33445">
    <property type="entry name" value="ATP SYNTHASE SUBUNIT B', CHLOROPLASTIC"/>
    <property type="match status" value="1"/>
</dbReference>
<dbReference type="Pfam" id="PF00430">
    <property type="entry name" value="ATP-synt_B"/>
    <property type="match status" value="1"/>
</dbReference>
<accession>Q1IIG4</accession>
<gene>
    <name evidence="1" type="primary">atpF</name>
    <name type="ordered locus">Acid345_4336</name>
</gene>
<name>ATPF_KORVE</name>
<sequence>MYAQEAQQKPEAQQSAPAAEQPKPAEEQAKPEQHVTNPNAAVGKELSEASHAAEGEEEAGEHMELKHSTMVKTLAKWLGVSVETSYWIAMAFNFAIVFALLGWAMKKNLPGVFKARNESIQRGIAEARAASDDAKRRLADIEARLSKMDGEVAAIRAVTEKESAAEEVRIREAAEADVKRILESAENEIDAATKQARRDLKSLAAGLAIDLATRKLHVDQQTDESLVRSFVAQLGKDGK</sequence>
<protein>
    <recommendedName>
        <fullName evidence="1">ATP synthase subunit b</fullName>
    </recommendedName>
    <alternativeName>
        <fullName evidence="1">ATP synthase F(0) sector subunit b</fullName>
    </alternativeName>
    <alternativeName>
        <fullName evidence="1">ATPase subunit I</fullName>
    </alternativeName>
    <alternativeName>
        <fullName evidence="1">F-type ATPase subunit b</fullName>
        <shortName evidence="1">F-ATPase subunit b</shortName>
    </alternativeName>
</protein>
<keyword id="KW-0066">ATP synthesis</keyword>
<keyword id="KW-0997">Cell inner membrane</keyword>
<keyword id="KW-1003">Cell membrane</keyword>
<keyword id="KW-0138">CF(0)</keyword>
<keyword id="KW-0375">Hydrogen ion transport</keyword>
<keyword id="KW-0406">Ion transport</keyword>
<keyword id="KW-0472">Membrane</keyword>
<keyword id="KW-1185">Reference proteome</keyword>
<keyword id="KW-0812">Transmembrane</keyword>
<keyword id="KW-1133">Transmembrane helix</keyword>
<keyword id="KW-0813">Transport</keyword>